<name>RMD9_YEAST</name>
<evidence type="ECO:0000255" key="1"/>
<evidence type="ECO:0000269" key="2">
    <source>
    </source>
</evidence>
<evidence type="ECO:0000269" key="3">
    <source>
    </source>
</evidence>
<evidence type="ECO:0000269" key="4">
    <source>
    </source>
</evidence>
<evidence type="ECO:0000269" key="5">
    <source>
    </source>
</evidence>
<evidence type="ECO:0000269" key="6">
    <source>
    </source>
</evidence>
<evidence type="ECO:0000269" key="7">
    <source>
    </source>
</evidence>
<evidence type="ECO:0000269" key="8">
    <source>
    </source>
</evidence>
<evidence type="ECO:0000269" key="9">
    <source>
    </source>
</evidence>
<evidence type="ECO:0000269" key="10">
    <source>
    </source>
</evidence>
<evidence type="ECO:0000303" key="11">
    <source>
    </source>
</evidence>
<evidence type="ECO:0000303" key="12">
    <source>
    </source>
</evidence>
<evidence type="ECO:0000305" key="13"/>
<evidence type="ECO:0000305" key="14">
    <source>
    </source>
</evidence>
<evidence type="ECO:0007829" key="15">
    <source>
        <dbReference type="PDB" id="7A9W"/>
    </source>
</evidence>
<evidence type="ECO:0007829" key="16">
    <source>
        <dbReference type="PDB" id="7A9X"/>
    </source>
</evidence>
<gene>
    <name evidence="12" type="primary">RMD9</name>
    <name type="ordered locus">YGL107C</name>
    <name type="ORF">G3075</name>
</gene>
<keyword id="KW-0002">3D-structure</keyword>
<keyword id="KW-0903">Direct protein sequencing</keyword>
<keyword id="KW-0472">Membrane</keyword>
<keyword id="KW-0496">Mitochondrion</keyword>
<keyword id="KW-0999">Mitochondrion inner membrane</keyword>
<keyword id="KW-0597">Phosphoprotein</keyword>
<keyword id="KW-1185">Reference proteome</keyword>
<keyword id="KW-0677">Repeat</keyword>
<keyword id="KW-0694">RNA-binding</keyword>
<keyword id="KW-0749">Sporulation</keyword>
<keyword id="KW-0809">Transit peptide</keyword>
<feature type="transit peptide" description="Mitochondrion" evidence="1">
    <location>
        <begin position="1"/>
        <end position="14"/>
    </location>
</feature>
<feature type="propeptide" id="PRO_0000454658" description="Removed in mature form" evidence="10">
    <location>
        <begin position="15"/>
        <end position="51"/>
    </location>
</feature>
<feature type="chain" id="PRO_0000202752" description="RNA-binding protein RMD9, mitochondrial">
    <location>
        <begin position="52"/>
        <end position="646"/>
    </location>
</feature>
<feature type="repeat" description="PPR1" evidence="14">
    <location>
        <begin position="209"/>
        <end position="238"/>
    </location>
</feature>
<feature type="repeat" description="PPR2" evidence="14">
    <location>
        <begin position="251"/>
        <end position="282"/>
    </location>
</feature>
<feature type="repeat" description="PPR3" evidence="14">
    <location>
        <begin position="288"/>
        <end position="317"/>
    </location>
</feature>
<feature type="repeat" description="PPR4" evidence="14">
    <location>
        <begin position="323"/>
        <end position="353"/>
    </location>
</feature>
<feature type="repeat" description="PPR5" evidence="14">
    <location>
        <begin position="363"/>
        <end position="394"/>
    </location>
</feature>
<feature type="repeat" description="PPR6" evidence="14">
    <location>
        <begin position="401"/>
        <end position="439"/>
    </location>
</feature>
<feature type="repeat" description="PPR7" evidence="14">
    <location>
        <begin position="444"/>
        <end position="473"/>
    </location>
</feature>
<feature type="repeat" description="PPR8" evidence="14">
    <location>
        <begin position="481"/>
        <end position="514"/>
    </location>
</feature>
<feature type="mutagenesis site" description="Causes respiratory deficiency in absence of RSM28." evidence="8">
    <original>V</original>
    <variation>I</variation>
    <location>
        <position position="363"/>
    </location>
</feature>
<feature type="sequence conflict" description="In Ref. 4; AAU09725." evidence="13" ref="4">
    <original>F</original>
    <variation>S</variation>
    <location>
        <position position="426"/>
    </location>
</feature>
<feature type="helix" evidence="16">
    <location>
        <begin position="84"/>
        <end position="102"/>
    </location>
</feature>
<feature type="helix" evidence="16">
    <location>
        <begin position="121"/>
        <end position="140"/>
    </location>
</feature>
<feature type="helix" evidence="16">
    <location>
        <begin position="148"/>
        <end position="171"/>
    </location>
</feature>
<feature type="strand" evidence="16">
    <location>
        <begin position="172"/>
        <end position="174"/>
    </location>
</feature>
<feature type="helix" evidence="16">
    <location>
        <begin position="183"/>
        <end position="204"/>
    </location>
</feature>
<feature type="helix" evidence="16">
    <location>
        <begin position="211"/>
        <end position="223"/>
    </location>
</feature>
<feature type="helix" evidence="16">
    <location>
        <begin position="227"/>
        <end position="236"/>
    </location>
</feature>
<feature type="turn" evidence="16">
    <location>
        <begin position="237"/>
        <end position="239"/>
    </location>
</feature>
<feature type="helix" evidence="16">
    <location>
        <begin position="243"/>
        <end position="248"/>
    </location>
</feature>
<feature type="helix" evidence="16">
    <location>
        <begin position="252"/>
        <end position="266"/>
    </location>
</feature>
<feature type="helix" evidence="16">
    <location>
        <begin position="270"/>
        <end position="280"/>
    </location>
</feature>
<feature type="helix" evidence="16">
    <location>
        <begin position="288"/>
        <end position="300"/>
    </location>
</feature>
<feature type="helix" evidence="16">
    <location>
        <begin position="304"/>
        <end position="317"/>
    </location>
</feature>
<feature type="helix" evidence="16">
    <location>
        <begin position="320"/>
        <end position="322"/>
    </location>
</feature>
<feature type="helix" evidence="16">
    <location>
        <begin position="324"/>
        <end position="335"/>
    </location>
</feature>
<feature type="helix" evidence="16">
    <location>
        <begin position="340"/>
        <end position="351"/>
    </location>
</feature>
<feature type="strand" evidence="16">
    <location>
        <begin position="355"/>
        <end position="357"/>
    </location>
</feature>
<feature type="helix" evidence="16">
    <location>
        <begin position="363"/>
        <end position="377"/>
    </location>
</feature>
<feature type="helix" evidence="16">
    <location>
        <begin position="380"/>
        <end position="394"/>
    </location>
</feature>
<feature type="helix" evidence="16">
    <location>
        <begin position="400"/>
        <end position="417"/>
    </location>
</feature>
<feature type="turn" evidence="16">
    <location>
        <begin position="418"/>
        <end position="420"/>
    </location>
</feature>
<feature type="helix" evidence="16">
    <location>
        <begin position="422"/>
        <end position="439"/>
    </location>
</feature>
<feature type="helix" evidence="16">
    <location>
        <begin position="444"/>
        <end position="453"/>
    </location>
</feature>
<feature type="helix" evidence="16">
    <location>
        <begin position="454"/>
        <end position="456"/>
    </location>
</feature>
<feature type="helix" evidence="16">
    <location>
        <begin position="460"/>
        <end position="472"/>
    </location>
</feature>
<feature type="helix" evidence="16">
    <location>
        <begin position="479"/>
        <end position="488"/>
    </location>
</feature>
<feature type="helix" evidence="16">
    <location>
        <begin position="489"/>
        <end position="491"/>
    </location>
</feature>
<feature type="helix" evidence="16">
    <location>
        <begin position="497"/>
        <end position="513"/>
    </location>
</feature>
<feature type="helix" evidence="16">
    <location>
        <begin position="521"/>
        <end position="529"/>
    </location>
</feature>
<feature type="helix" evidence="16">
    <location>
        <begin position="532"/>
        <end position="545"/>
    </location>
</feature>
<feature type="helix" evidence="16">
    <location>
        <begin position="583"/>
        <end position="594"/>
    </location>
</feature>
<feature type="helix" evidence="16">
    <location>
        <begin position="595"/>
        <end position="597"/>
    </location>
</feature>
<feature type="helix" evidence="16">
    <location>
        <begin position="602"/>
        <end position="606"/>
    </location>
</feature>
<feature type="helix" evidence="16">
    <location>
        <begin position="609"/>
        <end position="614"/>
    </location>
</feature>
<feature type="helix" evidence="16">
    <location>
        <begin position="616"/>
        <end position="621"/>
    </location>
</feature>
<feature type="turn" evidence="15">
    <location>
        <begin position="623"/>
        <end position="627"/>
    </location>
</feature>
<protein>
    <recommendedName>
        <fullName evidence="13">RNA-binding protein RMD9, mitochondrial</fullName>
    </recommendedName>
    <alternativeName>
        <fullName evidence="11">Dodecamer binding protein</fullName>
        <shortName evidence="11">DBP</shortName>
    </alternativeName>
    <alternativeName>
        <fullName>Required for meiotic nuclear division protein 9</fullName>
    </alternativeName>
</protein>
<proteinExistence type="evidence at protein level"/>
<reference key="1">
    <citation type="journal article" date="1997" name="Yeast">
        <title>The genes encoding the transcription factor yTAFII60, the G4p1 protein and a putative glucose transporter are contained in a 12.3 kb DNA fragment on the left arm of Saccharomyces cerevisiae chromosome VII.</title>
        <authorList>
            <person name="Paoluzi S."/>
            <person name="Minenkova O."/>
            <person name="Castagnoli L."/>
        </authorList>
    </citation>
    <scope>NUCLEOTIDE SEQUENCE [GENOMIC DNA]</scope>
</reference>
<reference key="2">
    <citation type="journal article" date="1997" name="Nature">
        <title>The nucleotide sequence of Saccharomyces cerevisiae chromosome VII.</title>
        <authorList>
            <person name="Tettelin H."/>
            <person name="Agostoni-Carbone M.L."/>
            <person name="Albermann K."/>
            <person name="Albers M."/>
            <person name="Arroyo J."/>
            <person name="Backes U."/>
            <person name="Barreiros T."/>
            <person name="Bertani I."/>
            <person name="Bjourson A.J."/>
            <person name="Brueckner M."/>
            <person name="Bruschi C.V."/>
            <person name="Carignani G."/>
            <person name="Castagnoli L."/>
            <person name="Cerdan E."/>
            <person name="Clemente M.L."/>
            <person name="Coblenz A."/>
            <person name="Coglievina M."/>
            <person name="Coissac E."/>
            <person name="Defoor E."/>
            <person name="Del Bino S."/>
            <person name="Delius H."/>
            <person name="Delneri D."/>
            <person name="de Wergifosse P."/>
            <person name="Dujon B."/>
            <person name="Durand P."/>
            <person name="Entian K.-D."/>
            <person name="Eraso P."/>
            <person name="Escribano V."/>
            <person name="Fabiani L."/>
            <person name="Fartmann B."/>
            <person name="Feroli F."/>
            <person name="Feuermann M."/>
            <person name="Frontali L."/>
            <person name="Garcia-Gonzalez M."/>
            <person name="Garcia-Saez M.I."/>
            <person name="Goffeau A."/>
            <person name="Guerreiro P."/>
            <person name="Hani J."/>
            <person name="Hansen M."/>
            <person name="Hebling U."/>
            <person name="Hernandez K."/>
            <person name="Heumann K."/>
            <person name="Hilger F."/>
            <person name="Hofmann B."/>
            <person name="Indge K.J."/>
            <person name="James C.M."/>
            <person name="Klima R."/>
            <person name="Koetter P."/>
            <person name="Kramer B."/>
            <person name="Kramer W."/>
            <person name="Lauquin G."/>
            <person name="Leuther H."/>
            <person name="Louis E.J."/>
            <person name="Maillier E."/>
            <person name="Marconi A."/>
            <person name="Martegani E."/>
            <person name="Mazon M.J."/>
            <person name="Mazzoni C."/>
            <person name="McReynolds A.D.K."/>
            <person name="Melchioretto P."/>
            <person name="Mewes H.-W."/>
            <person name="Minenkova O."/>
            <person name="Mueller-Auer S."/>
            <person name="Nawrocki A."/>
            <person name="Netter P."/>
            <person name="Neu R."/>
            <person name="Nombela C."/>
            <person name="Oliver S.G."/>
            <person name="Panzeri L."/>
            <person name="Paoluzi S."/>
            <person name="Plevani P."/>
            <person name="Portetelle D."/>
            <person name="Portillo F."/>
            <person name="Potier S."/>
            <person name="Purnelle B."/>
            <person name="Rieger M."/>
            <person name="Riles L."/>
            <person name="Rinaldi T."/>
            <person name="Robben J."/>
            <person name="Rodrigues-Pousada C."/>
            <person name="Rodriguez-Belmonte E."/>
            <person name="Rodriguez-Torres A.M."/>
            <person name="Rose M."/>
            <person name="Ruzzi M."/>
            <person name="Saliola M."/>
            <person name="Sanchez-Perez M."/>
            <person name="Schaefer B."/>
            <person name="Schaefer M."/>
            <person name="Scharfe M."/>
            <person name="Schmidheini T."/>
            <person name="Schreer A."/>
            <person name="Skala J."/>
            <person name="Souciet J.-L."/>
            <person name="Steensma H.Y."/>
            <person name="Talla E."/>
            <person name="Thierry A."/>
            <person name="Vandenbol M."/>
            <person name="van der Aart Q.J.M."/>
            <person name="Van Dyck L."/>
            <person name="Vanoni M."/>
            <person name="Verhasselt P."/>
            <person name="Voet M."/>
            <person name="Volckaert G."/>
            <person name="Wambutt R."/>
            <person name="Watson M.D."/>
            <person name="Weber N."/>
            <person name="Wedler E."/>
            <person name="Wedler H."/>
            <person name="Wipfli P."/>
            <person name="Wolf K."/>
            <person name="Wright L.F."/>
            <person name="Zaccaria P."/>
            <person name="Zimmermann M."/>
            <person name="Zollner A."/>
            <person name="Kleine K."/>
        </authorList>
    </citation>
    <scope>NUCLEOTIDE SEQUENCE [LARGE SCALE GENOMIC DNA]</scope>
    <source>
        <strain>ATCC 204508 / S288c</strain>
    </source>
</reference>
<reference key="3">
    <citation type="journal article" date="2014" name="G3 (Bethesda)">
        <title>The reference genome sequence of Saccharomyces cerevisiae: Then and now.</title>
        <authorList>
            <person name="Engel S.R."/>
            <person name="Dietrich F.S."/>
            <person name="Fisk D.G."/>
            <person name="Binkley G."/>
            <person name="Balakrishnan R."/>
            <person name="Costanzo M.C."/>
            <person name="Dwight S.S."/>
            <person name="Hitz B.C."/>
            <person name="Karra K."/>
            <person name="Nash R.S."/>
            <person name="Weng S."/>
            <person name="Wong E.D."/>
            <person name="Lloyd P."/>
            <person name="Skrzypek M.S."/>
            <person name="Miyasato S.R."/>
            <person name="Simison M."/>
            <person name="Cherry J.M."/>
        </authorList>
    </citation>
    <scope>GENOME REANNOTATION</scope>
    <source>
        <strain>ATCC 204508 / S288c</strain>
    </source>
</reference>
<reference key="4">
    <citation type="journal article" date="2007" name="Genome Res.">
        <title>Approaching a complete repository of sequence-verified protein-encoding clones for Saccharomyces cerevisiae.</title>
        <authorList>
            <person name="Hu Y."/>
            <person name="Rolfs A."/>
            <person name="Bhullar B."/>
            <person name="Murthy T.V.S."/>
            <person name="Zhu C."/>
            <person name="Berger M.F."/>
            <person name="Camargo A.A."/>
            <person name="Kelley F."/>
            <person name="McCarron S."/>
            <person name="Jepson D."/>
            <person name="Richardson A."/>
            <person name="Raphael J."/>
            <person name="Moreira D."/>
            <person name="Taycher E."/>
            <person name="Zuo D."/>
            <person name="Mohr S."/>
            <person name="Kane M.F."/>
            <person name="Williamson J."/>
            <person name="Simpson A.J.G."/>
            <person name="Bulyk M.L."/>
            <person name="Harlow E."/>
            <person name="Marsischky G."/>
            <person name="Kolodner R.D."/>
            <person name="LaBaer J."/>
        </authorList>
    </citation>
    <scope>NUCLEOTIDE SEQUENCE [GENOMIC DNA]</scope>
    <source>
        <strain>ATCC 204508 / S288c</strain>
    </source>
</reference>
<reference key="5">
    <citation type="journal article" date="2021" name="Proc. Natl. Acad. Sci. U.S.A.">
        <title>The pentatricopeptide repeat protein Rmd9 recognizes the dodecameric element in the 3'-UTRs of yeast mitochondrial mRNAs.</title>
        <authorList>
            <person name="Hillen H.S."/>
            <person name="Markov D.A."/>
            <person name="Wojtas I.D."/>
            <person name="Hofmann K.B."/>
            <person name="Lidschreiber M."/>
            <person name="Cowan A.T."/>
            <person name="Jones J.L."/>
            <person name="Temiakov D."/>
            <person name="Cramer P."/>
            <person name="Anikin M."/>
        </authorList>
    </citation>
    <scope>PROTEIN SEQUENCE OF 52-56</scope>
    <scope>X-RAY CRYSTALLOGRAPHY (2.45 ANGSTROMS) OF 51-646 IN COMPLEX WITH RNA</scope>
    <scope>FUNCTION</scope>
</reference>
<reference key="6">
    <citation type="journal article" date="1999" name="Biochem. Biophys. Res. Commun.">
        <title>Purification and characterization of an RNA dodecamer sequence binding protein from mitochondria of Saccharomyces cerevisiae.</title>
        <authorList>
            <person name="Li H."/>
            <person name="Zassenhaus H.P."/>
        </authorList>
    </citation>
    <scope>FUNCTION</scope>
    <scope>SUBUNIT</scope>
    <scope>SUBCELLULAR LOCATION</scope>
</reference>
<reference key="7">
    <citation type="journal article" date="2000" name="Curr. Genet.">
        <title>Phosphorylation is required for high-affinity binding of DBP, a yeast mitochondrial site-specific RNA binding protein.</title>
        <authorList>
            <person name="Li H."/>
            <person name="Zassenhaus H.P."/>
        </authorList>
    </citation>
    <scope>FUNCTION</scope>
    <scope>SUBCELLULAR LOCATION</scope>
    <scope>PHOSPHORYLATION</scope>
</reference>
<reference key="8">
    <citation type="journal article" date="2003" name="Genetics">
        <title>Large-scale functional genomic analysis of sporulation and meiosis in Saccharomyces cerevisiae.</title>
        <authorList>
            <person name="Enyenihi A.H."/>
            <person name="Saunders W.S."/>
        </authorList>
    </citation>
    <scope>DISRUPTION PHENOTYPE</scope>
</reference>
<reference key="9">
    <citation type="journal article" date="2003" name="Nature">
        <title>Global analysis of protein localization in budding yeast.</title>
        <authorList>
            <person name="Huh W.-K."/>
            <person name="Falvo J.V."/>
            <person name="Gerke L.C."/>
            <person name="Carroll A.S."/>
            <person name="Howson R.W."/>
            <person name="Weissman J.S."/>
            <person name="O'Shea E.K."/>
        </authorList>
    </citation>
    <scope>SUBCELLULAR LOCATION [LARGE SCALE ANALYSIS]</scope>
</reference>
<reference key="10">
    <citation type="journal article" date="2003" name="Nature">
        <title>Global analysis of protein expression in yeast.</title>
        <authorList>
            <person name="Ghaemmaghami S."/>
            <person name="Huh W.-K."/>
            <person name="Bower K."/>
            <person name="Howson R.W."/>
            <person name="Belle A."/>
            <person name="Dephoure N."/>
            <person name="O'Shea E.K."/>
            <person name="Weissman J.S."/>
        </authorList>
    </citation>
    <scope>LEVEL OF PROTEIN EXPRESSION [LARGE SCALE ANALYSIS]</scope>
</reference>
<reference key="11">
    <citation type="journal article" date="2003" name="Proc. Natl. Acad. Sci. U.S.A.">
        <title>The proteome of Saccharomyces cerevisiae mitochondria.</title>
        <authorList>
            <person name="Sickmann A."/>
            <person name="Reinders J."/>
            <person name="Wagner Y."/>
            <person name="Joppich C."/>
            <person name="Zahedi R.P."/>
            <person name="Meyer H.E."/>
            <person name="Schoenfisch B."/>
            <person name="Perschil I."/>
            <person name="Chacinska A."/>
            <person name="Guiard B."/>
            <person name="Rehling P."/>
            <person name="Pfanner N."/>
            <person name="Meisinger C."/>
        </authorList>
    </citation>
    <scope>SUBCELLULAR LOCATION [LARGE SCALE ANALYSIS]</scope>
    <source>
        <strain>ATCC 76625 / YPH499</strain>
    </source>
</reference>
<reference key="12">
    <citation type="journal article" date="2007" name="Genetics">
        <title>Rmd9p controls the processing/stability of mitochondrial mRNAs and its overexpression compensates for a partial deficiency of oxa1p in Saccharomyces cerevisiae.</title>
        <authorList>
            <person name="Nouet C."/>
            <person name="Bourens M."/>
            <person name="Hlavacek O."/>
            <person name="Marsy S."/>
            <person name="Lemaire C."/>
            <person name="Dujardin G."/>
        </authorList>
    </citation>
    <scope>FUNCTION</scope>
    <scope>SUBCELLULAR LOCATION</scope>
</reference>
<reference key="13">
    <citation type="journal article" date="2007" name="Genetics">
        <title>Translation initiation in Saccharomyces cerevisiae mitochondria: functional interactions among mitochondrial ribosomal protein Rsm28p, initiation factor 2, methionyl-tRNA-formyltransferase and novel protein Rmd9p.</title>
        <authorList>
            <person name="Williams E.H."/>
            <person name="Butler C.A."/>
            <person name="Bonnefoy N."/>
            <person name="Fox T.D."/>
        </authorList>
    </citation>
    <scope>FUNCTION</scope>
    <scope>SUBCELLULAR LOCATION</scope>
    <scope>MUTAGENESIS OF VAL-363</scope>
</reference>
<sequence>MMLRRNAVRSLKTMEISVSNVVNSGSIAMLRGKLANVVLSDRTYHSSPIFHKNVPKGVLDKKNGREQRKTEQNVFNVDPASPWRHELLSFDECVSSALKYSTTPLQNTYKRIGNNQLNKNPSFAMFWDSMGRAMELYYSLRESPDFNAYRVSRLIHLLHNGLRSTRDQLVKLSRKPDYDSQSFHKEMMNFLCNSLKDISDDILIGKVSVSGYGATHLLTSFKELSFDDDCIRIWEASKNLSDETTSQAFQEPKVVGFMLPLLYAKTRSLTEPNELYNQIIQSKEFIHPNLYSGLIKVFIKAEDYEKALSLFGQLCEKAEVRNYGYLIETHLSFIGDSKNLTLAESFFDKIINDEMPYKIILQVSTVNSFLQNIWKAQNDFDHVYRIWEKAVKFYGNTVNPGILSSLNNTFFTIFFENYINDNINGFRKLQEIITFYSGVKKIDEPFFNVMLTRASIWHERSIIDFIDKNYTLYHIPRTIISYRILLKSLGSIDNTNNEEILDRWLELVKKLNELGQQYIANADLSALRDATVVWSQSKRDEKVFSAKAKGTPATTTTTEDDIKVPKPLENLKNEDSTSNSEDRIELYLKILKRYTPYFRATKQVYRYTTGCAESYPILNEYLSGYSDLSAEDIPVPQLHSFIAKEQ</sequence>
<comment type="function">
    <text evidence="2 3 8 9 10">Binds the RNA motif 5'-AAUAA[U/C]AUUCUU-3' in the 3'-UTR of mitochondrial mRNAs (PubMed:10441495, PubMed:10905425, PubMed:33876744). Involved in the processing or stability of mitochondrial mRNAs (PubMed:17194786, PubMed:17194787, PubMed:33876744).</text>
</comment>
<comment type="subunit">
    <text evidence="2">Monomer.</text>
</comment>
<comment type="subcellular location">
    <subcellularLocation>
        <location evidence="2 3 5 7 8 9">Mitochondrion inner membrane</location>
        <topology evidence="5 7 8 9">Peripheral membrane protein</topology>
        <orientation evidence="5 7 8 9">Matrix side</orientation>
    </subcellularLocation>
</comment>
<comment type="PTM">
    <text evidence="3">Phosphorylated (PubMed:10905425). Phosphorylation promotes binding to RNA (PubMed:10905425).</text>
</comment>
<comment type="disruption phenotype">
    <text evidence="4">Abnormal meiosis.</text>
</comment>
<comment type="miscellaneous">
    <text evidence="6">Present with 4800 molecules/cell in log phase SD medium.</text>
</comment>
<comment type="similarity">
    <text evidence="13">Belongs to the RMD9 family.</text>
</comment>
<organism>
    <name type="scientific">Saccharomyces cerevisiae (strain ATCC 204508 / S288c)</name>
    <name type="common">Baker's yeast</name>
    <dbReference type="NCBI Taxonomy" id="559292"/>
    <lineage>
        <taxon>Eukaryota</taxon>
        <taxon>Fungi</taxon>
        <taxon>Dikarya</taxon>
        <taxon>Ascomycota</taxon>
        <taxon>Saccharomycotina</taxon>
        <taxon>Saccharomycetes</taxon>
        <taxon>Saccharomycetales</taxon>
        <taxon>Saccharomycetaceae</taxon>
        <taxon>Saccharomyces</taxon>
    </lineage>
</organism>
<accession>P53140</accession>
<accession>D6VU39</accession>
<accession>Q66RA9</accession>
<dbReference type="EMBL" id="X97644">
    <property type="protein sequence ID" value="CAA66245.1"/>
    <property type="molecule type" value="Genomic_DNA"/>
</dbReference>
<dbReference type="EMBL" id="Z72629">
    <property type="protein sequence ID" value="CAA96814.1"/>
    <property type="molecule type" value="Genomic_DNA"/>
</dbReference>
<dbReference type="EMBL" id="AY723808">
    <property type="protein sequence ID" value="AAU09725.1"/>
    <property type="molecule type" value="Genomic_DNA"/>
</dbReference>
<dbReference type="EMBL" id="BK006941">
    <property type="protein sequence ID" value="DAA08000.1"/>
    <property type="molecule type" value="Genomic_DNA"/>
</dbReference>
<dbReference type="PIR" id="S64115">
    <property type="entry name" value="S64115"/>
</dbReference>
<dbReference type="RefSeq" id="NP_011408.1">
    <property type="nucleotide sequence ID" value="NM_001180972.1"/>
</dbReference>
<dbReference type="PDB" id="7A9W">
    <property type="method" value="X-ray"/>
    <property type="resolution" value="2.55 A"/>
    <property type="chains" value="A=51-646"/>
</dbReference>
<dbReference type="PDB" id="7A9X">
    <property type="method" value="X-ray"/>
    <property type="resolution" value="2.45 A"/>
    <property type="chains" value="A=51-646"/>
</dbReference>
<dbReference type="PDBsum" id="7A9W"/>
<dbReference type="PDBsum" id="7A9X"/>
<dbReference type="SMR" id="P53140"/>
<dbReference type="BioGRID" id="33143">
    <property type="interactions" value="254"/>
</dbReference>
<dbReference type="FunCoup" id="P53140">
    <property type="interactions" value="48"/>
</dbReference>
<dbReference type="IntAct" id="P53140">
    <property type="interactions" value="4"/>
</dbReference>
<dbReference type="STRING" id="4932.YGL107C"/>
<dbReference type="PaxDb" id="4932-YGL107C"/>
<dbReference type="PeptideAtlas" id="P53140"/>
<dbReference type="EnsemblFungi" id="YGL107C_mRNA">
    <property type="protein sequence ID" value="YGL107C"/>
    <property type="gene ID" value="YGL107C"/>
</dbReference>
<dbReference type="GeneID" id="852771"/>
<dbReference type="KEGG" id="sce:YGL107C"/>
<dbReference type="AGR" id="SGD:S000003075"/>
<dbReference type="SGD" id="S000003075">
    <property type="gene designation" value="RMD9"/>
</dbReference>
<dbReference type="VEuPathDB" id="FungiDB:YGL107C"/>
<dbReference type="eggNOG" id="ENOG502QUSW">
    <property type="taxonomic scope" value="Eukaryota"/>
</dbReference>
<dbReference type="GeneTree" id="ENSGT00940000176413"/>
<dbReference type="HOGENOM" id="CLU_019840_0_0_1"/>
<dbReference type="InParanoid" id="P53140"/>
<dbReference type="OMA" id="WENGVND"/>
<dbReference type="OrthoDB" id="4081443at2759"/>
<dbReference type="BioCyc" id="YEAST:G3O-30606-MONOMER"/>
<dbReference type="BioGRID-ORCS" id="852771">
    <property type="hits" value="7 hits in 10 CRISPR screens"/>
</dbReference>
<dbReference type="PRO" id="PR:P53140"/>
<dbReference type="Proteomes" id="UP000002311">
    <property type="component" value="Chromosome VII"/>
</dbReference>
<dbReference type="RNAct" id="P53140">
    <property type="molecule type" value="protein"/>
</dbReference>
<dbReference type="GO" id="GO:0005743">
    <property type="term" value="C:mitochondrial inner membrane"/>
    <property type="evidence" value="ECO:0007669"/>
    <property type="project" value="UniProtKB-SubCell"/>
</dbReference>
<dbReference type="GO" id="GO:0005739">
    <property type="term" value="C:mitochondrion"/>
    <property type="evidence" value="ECO:0000314"/>
    <property type="project" value="SGD"/>
</dbReference>
<dbReference type="GO" id="GO:0003730">
    <property type="term" value="F:mRNA 3'-UTR binding"/>
    <property type="evidence" value="ECO:0000314"/>
    <property type="project" value="UniProtKB"/>
</dbReference>
<dbReference type="GO" id="GO:0003729">
    <property type="term" value="F:mRNA binding"/>
    <property type="evidence" value="ECO:0007005"/>
    <property type="project" value="SGD"/>
</dbReference>
<dbReference type="GO" id="GO:0070935">
    <property type="term" value="P:3'-UTR-mediated mRNA stabilization"/>
    <property type="evidence" value="ECO:0000314"/>
    <property type="project" value="UniProtKB"/>
</dbReference>
<dbReference type="GO" id="GO:0009060">
    <property type="term" value="P:aerobic respiration"/>
    <property type="evidence" value="ECO:0000315"/>
    <property type="project" value="SGD"/>
</dbReference>
<dbReference type="GO" id="GO:0090615">
    <property type="term" value="P:mitochondrial mRNA processing"/>
    <property type="evidence" value="ECO:0000314"/>
    <property type="project" value="SGD"/>
</dbReference>
<dbReference type="GO" id="GO:1903108">
    <property type="term" value="P:regulation of mitochondrial transcription"/>
    <property type="evidence" value="ECO:0000314"/>
    <property type="project" value="SGD"/>
</dbReference>
<dbReference type="GO" id="GO:0043488">
    <property type="term" value="P:regulation of mRNA stability"/>
    <property type="evidence" value="ECO:0000315"/>
    <property type="project" value="SGD"/>
</dbReference>
<dbReference type="GO" id="GO:0030435">
    <property type="term" value="P:sporulation resulting in formation of a cellular spore"/>
    <property type="evidence" value="ECO:0007669"/>
    <property type="project" value="UniProtKB-KW"/>
</dbReference>
<dbReference type="GO" id="GO:0006413">
    <property type="term" value="P:translational initiation"/>
    <property type="evidence" value="ECO:0000316"/>
    <property type="project" value="SGD"/>
</dbReference>
<dbReference type="FunFam" id="1.25.40.10:FF:001012">
    <property type="entry name" value="Protein RMD9, mitochondrial"/>
    <property type="match status" value="1"/>
</dbReference>
<dbReference type="Gene3D" id="1.25.40.10">
    <property type="entry name" value="Tetratricopeptide repeat domain"/>
    <property type="match status" value="1"/>
</dbReference>
<dbReference type="InterPro" id="IPR011990">
    <property type="entry name" value="TPR-like_helical_dom_sf"/>
</dbReference>